<dbReference type="EMBL" id="AY699609">
    <property type="protein sequence ID" value="AAU06579.1"/>
    <property type="molecule type" value="mRNA"/>
</dbReference>
<dbReference type="EMBL" id="FN666434">
    <property type="protein sequence ID" value="CBJ34333.1"/>
    <property type="molecule type" value="mRNA"/>
</dbReference>
<dbReference type="EMBL" id="KC625587">
    <property type="protein sequence ID" value="AHA36694.1"/>
    <property type="molecule type" value="mRNA"/>
</dbReference>
<dbReference type="EMBL" id="KC625588">
    <property type="protein sequence ID" value="AHA36695.1"/>
    <property type="molecule type" value="mRNA"/>
</dbReference>
<dbReference type="EMBL" id="KC625589">
    <property type="protein sequence ID" value="AHA36696.1"/>
    <property type="molecule type" value="mRNA"/>
</dbReference>
<dbReference type="EMBL" id="KC625590">
    <property type="protein sequence ID" value="AHA36697.1"/>
    <property type="molecule type" value="mRNA"/>
</dbReference>
<dbReference type="EMBL" id="KC625591">
    <property type="protein sequence ID" value="AHA36698.1"/>
    <property type="molecule type" value="mRNA"/>
</dbReference>
<dbReference type="EMBL" id="KC625592">
    <property type="protein sequence ID" value="AHA36699.1"/>
    <property type="molecule type" value="mRNA"/>
</dbReference>
<dbReference type="EMBL" id="KC625593">
    <property type="protein sequence ID" value="AHA36700.1"/>
    <property type="molecule type" value="mRNA"/>
</dbReference>
<dbReference type="EMBL" id="KC625594">
    <property type="protein sequence ID" value="AHA36701.1"/>
    <property type="molecule type" value="mRNA"/>
</dbReference>
<dbReference type="EMBL" id="KC625595">
    <property type="protein sequence ID" value="AHA36702.1"/>
    <property type="molecule type" value="mRNA"/>
</dbReference>
<dbReference type="EMBL" id="KM202065">
    <property type="protein sequence ID" value="AIG20718.1"/>
    <property type="molecule type" value="mRNA"/>
</dbReference>
<dbReference type="EMBL" id="KM202066">
    <property type="protein sequence ID" value="AIG20719.1"/>
    <property type="molecule type" value="mRNA"/>
</dbReference>
<dbReference type="EMBL" id="KX000389">
    <property type="protein sequence ID" value="APC26091.1"/>
    <property type="molecule type" value="mRNA"/>
</dbReference>
<dbReference type="EMBL" id="KX000390">
    <property type="protein sequence ID" value="APC26092.1"/>
    <property type="molecule type" value="mRNA"/>
</dbReference>
<dbReference type="EMBL" id="MN897004">
    <property type="protein sequence ID" value="QNT12791.1"/>
    <property type="molecule type" value="mRNA"/>
</dbReference>
<dbReference type="EMBL" id="MN897005">
    <property type="protein sequence ID" value="QNT12792.1"/>
    <property type="molecule type" value="mRNA"/>
</dbReference>
<dbReference type="RefSeq" id="XP_016456737.1">
    <property type="nucleotide sequence ID" value="XM_016601251.1"/>
</dbReference>
<dbReference type="SMR" id="Q66WU1"/>
<dbReference type="STRING" id="4097.A0A075QPA9"/>
<dbReference type="PaxDb" id="4097-Q66WU1"/>
<dbReference type="KEGG" id="nta:107770125"/>
<dbReference type="KEGG" id="nta:107780685"/>
<dbReference type="OMA" id="EEFWAIV"/>
<dbReference type="OrthoDB" id="590761at2759"/>
<dbReference type="PhylomeDB" id="Q66WU1"/>
<dbReference type="Proteomes" id="UP000084051">
    <property type="component" value="Unplaced"/>
</dbReference>
<dbReference type="GO" id="GO:0016281">
    <property type="term" value="C:eukaryotic translation initiation factor 4F complex"/>
    <property type="evidence" value="ECO:0000318"/>
    <property type="project" value="GO_Central"/>
</dbReference>
<dbReference type="GO" id="GO:0005634">
    <property type="term" value="C:nucleus"/>
    <property type="evidence" value="ECO:0007669"/>
    <property type="project" value="UniProtKB-SubCell"/>
</dbReference>
<dbReference type="GO" id="GO:0000340">
    <property type="term" value="F:RNA 7-methylguanosine cap binding"/>
    <property type="evidence" value="ECO:0000318"/>
    <property type="project" value="GO_Central"/>
</dbReference>
<dbReference type="GO" id="GO:0003743">
    <property type="term" value="F:translation initiation factor activity"/>
    <property type="evidence" value="ECO:0000318"/>
    <property type="project" value="GO_Central"/>
</dbReference>
<dbReference type="GO" id="GO:0006952">
    <property type="term" value="P:defense response"/>
    <property type="evidence" value="ECO:0007669"/>
    <property type="project" value="UniProtKB-KW"/>
</dbReference>
<dbReference type="GO" id="GO:0006417">
    <property type="term" value="P:regulation of translation"/>
    <property type="evidence" value="ECO:0007669"/>
    <property type="project" value="UniProtKB-KW"/>
</dbReference>
<dbReference type="GO" id="GO:0009615">
    <property type="term" value="P:response to virus"/>
    <property type="evidence" value="ECO:0007669"/>
    <property type="project" value="UniProtKB-ARBA"/>
</dbReference>
<dbReference type="GO" id="GO:0006413">
    <property type="term" value="P:translational initiation"/>
    <property type="evidence" value="ECO:0000318"/>
    <property type="project" value="GO_Central"/>
</dbReference>
<dbReference type="FunFam" id="3.30.760.10:FF:000003">
    <property type="entry name" value="Eukaryotic translation initiation factor 4E"/>
    <property type="match status" value="1"/>
</dbReference>
<dbReference type="Gene3D" id="3.30.760.10">
    <property type="entry name" value="RNA Cap, Translation Initiation Factor Eif4e"/>
    <property type="match status" value="1"/>
</dbReference>
<dbReference type="InterPro" id="IPR023398">
    <property type="entry name" value="TIF_eIF4e-like"/>
</dbReference>
<dbReference type="InterPro" id="IPR001040">
    <property type="entry name" value="TIF_eIF_4E"/>
</dbReference>
<dbReference type="InterPro" id="IPR019770">
    <property type="entry name" value="TIF_eIF_4E_CS"/>
</dbReference>
<dbReference type="PANTHER" id="PTHR11960">
    <property type="entry name" value="EUKARYOTIC TRANSLATION INITIATION FACTOR 4E RELATED"/>
    <property type="match status" value="1"/>
</dbReference>
<dbReference type="PANTHER" id="PTHR11960:SF60">
    <property type="entry name" value="EUKARYOTIC TRANSLATION INITIATION FACTOR ISOFORM 4E-2"/>
    <property type="match status" value="1"/>
</dbReference>
<dbReference type="Pfam" id="PF01652">
    <property type="entry name" value="IF4E"/>
    <property type="match status" value="1"/>
</dbReference>
<dbReference type="SUPFAM" id="SSF55418">
    <property type="entry name" value="eIF4e-like"/>
    <property type="match status" value="1"/>
</dbReference>
<dbReference type="PROSITE" id="PS00813">
    <property type="entry name" value="IF4E"/>
    <property type="match status" value="1"/>
</dbReference>
<feature type="chain" id="PRO_0000454075" description="Eukaryotic translation initiation factor isoform 4E">
    <location>
        <begin position="1"/>
        <end position="200"/>
    </location>
</feature>
<feature type="region of interest" description="Disordered" evidence="5">
    <location>
        <begin position="1"/>
        <end position="22"/>
    </location>
</feature>
<feature type="binding site" evidence="3">
    <location>
        <begin position="44"/>
        <end position="49"/>
    </location>
    <ligand>
        <name>mRNA</name>
        <dbReference type="ChEBI" id="CHEBI:33699"/>
    </ligand>
    <ligandPart>
        <name>N(7)-methylguanosine 5'-triphosphate group</name>
        <dbReference type="ChEBI" id="CHEBI:74429"/>
        <note>m7GTP residue in mRNA cap</note>
    </ligandPart>
</feature>
<feature type="binding site" evidence="3">
    <location>
        <position position="76"/>
    </location>
    <ligand>
        <name>mRNA</name>
        <dbReference type="ChEBI" id="CHEBI:33699"/>
    </ligand>
    <ligandPart>
        <name>N(7)-methylguanosine 5'-triphosphate group</name>
        <dbReference type="ChEBI" id="CHEBI:74429"/>
        <note>m7GTP residue in mRNA cap</note>
    </ligandPart>
</feature>
<feature type="binding site" evidence="3">
    <location>
        <begin position="94"/>
        <end position="95"/>
    </location>
    <ligand>
        <name>mRNA</name>
        <dbReference type="ChEBI" id="CHEBI:33699"/>
    </ligand>
    <ligandPart>
        <name>N(7)-methylguanosine 5'-triphosphate group</name>
        <dbReference type="ChEBI" id="CHEBI:74429"/>
        <note>m7GTP residue in mRNA cap</note>
    </ligandPart>
</feature>
<feature type="binding site" evidence="3">
    <location>
        <begin position="145"/>
        <end position="150"/>
    </location>
    <ligand>
        <name>mRNA</name>
        <dbReference type="ChEBI" id="CHEBI:33699"/>
    </ligand>
    <ligandPart>
        <name>N(7)-methylguanosine 5'-triphosphate group</name>
        <dbReference type="ChEBI" id="CHEBI:74429"/>
        <note>m7GTP residue in mRNA cap</note>
    </ligandPart>
</feature>
<feature type="binding site" evidence="4">
    <location>
        <begin position="189"/>
        <end position="192"/>
    </location>
    <ligand>
        <name>mRNA</name>
        <dbReference type="ChEBI" id="CHEBI:33699"/>
    </ligand>
    <ligandPart>
        <name>N(7)-methylguanosine 5'-triphosphate group</name>
        <dbReference type="ChEBI" id="CHEBI:74429"/>
        <note>m7GTP residue in mRNA cap</note>
    </ligandPart>
</feature>
<feature type="disulfide bond" evidence="3">
    <location>
        <begin position="99"/>
        <end position="138"/>
    </location>
</feature>
<feature type="sequence variant" description="In allele A." evidence="7">
    <original>I</original>
    <variation>V</variation>
    <location>
        <position position="7"/>
    </location>
</feature>
<feature type="sequence variant" description="In strain: Xanthi; allele 1." evidence="8">
    <original>E</original>
    <variation>G</variation>
    <location>
        <position position="8"/>
    </location>
</feature>
<feature type="sequence variant" description="In strain: T024242; alleles A, eIF4E2b and eIFiso4E-T." evidence="7 9 10 11">
    <original>PPASATETVA</original>
    <variation>LPAPDTVE</variation>
    <location>
        <begin position="13"/>
        <end position="22"/>
    </location>
</feature>
<feature type="sequence variant" description="In strain: T024242; alleles A, eIF4E2b and eIFiso4E-T." evidence="7 9 10 11">
    <location>
        <begin position="38"/>
        <end position="40"/>
    </location>
</feature>
<feature type="sequence variant" description="In strain: T024242; alleles A, eIF4E2b and eIFiso4E-T." evidence="7 9 10 11">
    <original>AWGSS</original>
    <variation>VWASA</variation>
    <location>
        <begin position="47"/>
        <end position="51"/>
    </location>
</feature>
<feature type="sequence variant" description="In strain: T024242; alleles A, eIF4E2b and eIFiso4E-T." evidence="7 9 10 11">
    <original>S</original>
    <variation>N</variation>
    <location>
        <position position="101"/>
    </location>
</feature>
<feature type="sequence variant" description="In strain: Xanthi; allele 1." evidence="8">
    <original>V</original>
    <variation>I</variation>
    <location>
        <position position="107"/>
    </location>
</feature>
<feature type="sequence variant" description="In strain: S10809." evidence="9">
    <original>DKLSLWTKTASNEAIQMSIGRKWKEIIDAE</original>
    <variation>RRYVEWLPVYVGVRINFPYGLRLPPMKQFR</variation>
    <location>
        <begin position="149"/>
        <end position="178"/>
    </location>
</feature>
<feature type="sequence variant" description="In strain: T024242; alleles eIF4E2b and eIFiso4E-T." evidence="9 10 11">
    <original>K</original>
    <variation>R</variation>
    <location>
        <position position="156"/>
    </location>
</feature>
<feature type="sequence variant" description="In strain: T024242; alleles eIF4E2b and eIFiso4E-T." evidence="9 10 11">
    <original>I</original>
    <variation>A</variation>
    <location>
        <position position="163"/>
    </location>
</feature>
<feature type="sequence variant" description="In eIFiso4E-S." evidence="11">
    <original>M</original>
    <variation>V</variation>
    <location>
        <position position="165"/>
    </location>
</feature>
<feature type="sequence variant" description="In strain: S10809." evidence="9">
    <location>
        <begin position="179"/>
        <end position="200"/>
    </location>
</feature>
<feature type="sequence variant" description="In strain: T024242; allele eIFiso4E-T." evidence="9 11">
    <original>RERSA</original>
    <variation>KERSV</variation>
    <location>
        <begin position="190"/>
        <end position="194"/>
    </location>
</feature>
<feature type="sequence variant" description="In allele eIF4E2b." evidence="10">
    <original>R</original>
    <variation>K</variation>
    <location>
        <position position="190"/>
    </location>
</feature>
<reference key="1">
    <citation type="journal article" date="2005" name="Plant Mol. Biol.">
        <title>Translation initiation factors eIF4E and eIFiso4E are required for polysome formation and regulate plant growth in tobacco.</title>
        <authorList>
            <person name="Combe J.P."/>
            <person name="Petracek M.E."/>
            <person name="van Eldik G."/>
            <person name="Meulewaeter F."/>
            <person name="Twell D."/>
        </authorList>
    </citation>
    <scope>NUCLEOTIDE SEQUENCE [MRNA]</scope>
    <scope>FUNCTION</scope>
    <scope>DISRUPTION PHENOTYPE</scope>
    <scope>TISSUE SPECIFICITY</scope>
    <scope>ALTERNATIVE SPLICING</scope>
    <source>
        <strain>cv. Samsun</strain>
    </source>
</reference>
<reference key="2">
    <citation type="journal article" date="2011" name="J. Virol.">
        <title>Helper component proteinase of the genus Potyvirus is an interaction partner of translation initiation factors eIF(iso)4E and eIF4E and contains a 4E binding motif.</title>
        <authorList>
            <person name="Ala-Poikela M.S."/>
            <person name="Goytia E."/>
            <person name="Haikonen T."/>
            <person name="Rajamaeki M.L."/>
            <person name="Valkonen J.P.T."/>
        </authorList>
    </citation>
    <scope>NUCLEOTIDE SEQUENCE [MRNA]</scope>
    <scope>VARIANTS VAL-7; 13-PRO--ALA-22 DELINS LEU-PRO-ALA-PRO-ASP-THR-VAL-GLU; 38-ASN--SER-40 DEL; 47-ALA--SER-51 DELINS VAL-TRP-ALA-SER-ALA AND ASN-101</scope>
    <source>
        <tissue>Leaf</tissue>
    </source>
</reference>
<reference key="3">
    <citation type="journal article" date="2013" name="Horticult. Environ. Biotechnol.">
        <title>Exploring natural variations in eIF4E and screening for potyviral resistance in diverse Nicotiana species.</title>
        <authorList>
            <person name="Yeam I."/>
            <person name="Jung J."/>
        </authorList>
    </citation>
    <scope>NUCLEOTIDE SEQUENCE [MRNA]</scope>
    <scope>FUNCTION</scope>
    <scope>FUNCTION (MICROBIAL INFECTION)</scope>
    <scope>SUBUNIT</scope>
    <scope>VARIANTS GLY-8 AND ILE-107</scope>
    <source>
        <strain>cv. Bright Yellow 2</strain>
        <strain>cv. KF118</strain>
        <strain>cv. KF120</strain>
        <strain>cv. KY14</strain>
        <strain>cv. Petit Havana</strain>
        <strain>cv. Samsun</strain>
        <strain>cv. Virginia Bright</strain>
        <strain>cv. Xanthi</strain>
    </source>
</reference>
<reference key="4">
    <citation type="journal article" date="2015" name="Plant Mol. Biol. Rep.">
        <title>A Eukaryotic Translation Initiation Factor 4E (eIF4E) is Responsible for the 'va' Tobacco Recessive Resistance to Potyviruses.</title>
        <authorList>
            <person name="Julio E."/>
            <person name="Cotucheau J."/>
            <person name="Decorps C."/>
            <person name="Volpatti R."/>
            <person name="Sentenac C."/>
            <person name="Candresse T."/>
            <person name="Dorlhac de Borne F."/>
        </authorList>
    </citation>
    <scope>NUCLEOTIDE SEQUENCE [MRNA]</scope>
    <scope>VARIANTS 13-PRO--ALA-22 DELINS LEU-PRO-ALA-PRO-ASP-THR-VAL-GLU; 38-ASN--SER-40 DEL; 47-ALA--SER-51 DELINS VAL-TRP-ALA-SER-ALA; ASN-101; 149-ASP--GLU-178 DELINS ARG-ARG-TYR-VAL-GLU-TRP-LEU-PRO-VAL-TYR-VAL-GLY-VAL-ARG-ILE-ASN-PHE-PRO-TYR-GLY-LEU-ARG-LEU-PRO-PRO-MET-LYS-GLN-PHE-ARG; ARG-156; ALA-163; 179-LYS--VAL-200 DEL AND 190-ARG--ALA-194 DELINS LYS-GLU-ARG-SER-VAL</scope>
    <scope>TISSUE SPECIFICITY</scope>
    <source>
        <tissue>Leaf</tissue>
        <tissue>Root</tissue>
        <tissue>Stem</tissue>
    </source>
</reference>
<reference key="5">
    <citation type="submission" date="2016-03" db="EMBL/GenBank/DDBJ databases">
        <title>TALEN-mediated mutagenesis of NteIF4E1a leads to Patato virus Y (PVY) resistance in cultivated tobacco (Nicotana tobacum).</title>
        <authorList>
            <person name="Yang D.-H."/>
        </authorList>
    </citation>
    <scope>NUCLEOTIDE SEQUENCE [MRNA]</scope>
    <scope>VARIANTS 13-PRO--ALA-22 DELINS LEU-PRO-ALA-PRO-ASP-THR-VAL-GLU; 38-ASN--SER-40 DEL; 47-ALA--SER-51 DELINS VAL-TRP-ALA-SER-ALA; ASN-101; ARG-156; ALA-163 AND LYS-190</scope>
</reference>
<reference key="6">
    <citation type="submission" date="2020-01" db="EMBL/GenBank/DDBJ databases">
        <title>Simultaneous mutation of multiple eukaryotic translation-initiation factor genes by CRISPR/Cas9 confers durable and broad resistance to potyviruses in tobacco.</title>
        <authorList>
            <person name="Liu Y."/>
            <person name="Huang C."/>
            <person name="Li Z."/>
        </authorList>
    </citation>
    <scope>NUCLEOTIDE SEQUENCE [MRNA]</scope>
    <scope>VARIANT VAL-165</scope>
    <scope>VARIANTS 13-PRO--ALA-22 DELINS LEU-PRO-ALA-PRO-ASP-THR-VAL-GLU; 38-ASN--SER-40 DEL; 47-ALA--SER-51 DELINS VAL-TRP-ALA-SER-ALA; ASN-101; ARG-156; ALA-163; VAL-165 AND 190-ARG--ALA-194 DELINS LYS-GLU-ARG-SER-VAL</scope>
</reference>
<reference key="7">
    <citation type="journal article" date="2014" name="Nat. Commun.">
        <title>The tobacco genome sequence and its comparison with those of tomato and potato.</title>
        <authorList>
            <person name="Sierro N."/>
            <person name="Battey J.N."/>
            <person name="Ouadi S."/>
            <person name="Bakaher N."/>
            <person name="Bovet L."/>
            <person name="Willig A."/>
            <person name="Goepfert S."/>
            <person name="Peitsch M.C."/>
            <person name="Ivanov N.V."/>
        </authorList>
    </citation>
    <scope>NUCLEOTIDE SEQUENCE [LARGE SCALE GENOMIC DNA]</scope>
    <source>
        <strain>cv. TN90</strain>
    </source>
</reference>
<evidence type="ECO:0000250" key="1">
    <source>
        <dbReference type="UniProtKB" id="A0A445AGS0"/>
    </source>
</evidence>
<evidence type="ECO:0000250" key="2">
    <source>
        <dbReference type="UniProtKB" id="O04663"/>
    </source>
</evidence>
<evidence type="ECO:0000250" key="3">
    <source>
        <dbReference type="UniProtKB" id="P29557"/>
    </source>
</evidence>
<evidence type="ECO:0000250" key="4">
    <source>
        <dbReference type="UniProtKB" id="Q00LS8"/>
    </source>
</evidence>
<evidence type="ECO:0000256" key="5">
    <source>
        <dbReference type="SAM" id="MobiDB-lite"/>
    </source>
</evidence>
<evidence type="ECO:0000269" key="6">
    <source>
    </source>
</evidence>
<evidence type="ECO:0000269" key="7">
    <source>
    </source>
</evidence>
<evidence type="ECO:0000269" key="8">
    <source ref="3"/>
</evidence>
<evidence type="ECO:0000269" key="9">
    <source ref="4"/>
</evidence>
<evidence type="ECO:0000269" key="10">
    <source ref="5"/>
</evidence>
<evidence type="ECO:0000269" key="11">
    <source ref="6"/>
</evidence>
<evidence type="ECO:0000303" key="12">
    <source>
    </source>
</evidence>
<evidence type="ECO:0000303" key="13">
    <source ref="3"/>
</evidence>
<evidence type="ECO:0000303" key="14">
    <source ref="4"/>
</evidence>
<evidence type="ECO:0000303" key="15">
    <source ref="5"/>
</evidence>
<evidence type="ECO:0000305" key="16"/>
<evidence type="ECO:0000305" key="17">
    <source ref="3"/>
</evidence>
<evidence type="ECO:0000312" key="18">
    <source>
        <dbReference type="RefSeq" id="XP_016456737.1"/>
    </source>
</evidence>
<name>IFI4E_TOBAC</name>
<gene>
    <name evidence="12 13" type="primary">eIFiso4E</name>
    <name evidence="15" type="synonym">eIF4E2a</name>
    <name evidence="14" type="synonym">S10809</name>
    <name evidence="14" type="synonym">T024242</name>
    <name evidence="18" type="ORF">LOC107780685</name>
</gene>
<sequence>MATEAPIEATEVPPASATETVAKQPHKLERRWTFWFDNQSKPKQGAAWGSSLRKAYTFETVEEFWSLYDQIFKPSKLTANADFHLFKAGIEPKWEDPECASGGKWTVTSSRKANLETMWLETLMALVGEQFDESEEICGVVASVRRSQDKLSLWTKTASNEAIQMSIGRKWKEIIDAEKISYSFHDDSKRERSAKSRYTV</sequence>
<protein>
    <recommendedName>
        <fullName evidence="12 13 15">Eukaryotic translation initiation factor isoform 4E</fullName>
        <shortName evidence="12 13">eIF(iso)-4E</shortName>
        <shortName evidence="12 13">eIF(iso)4E</shortName>
    </recommendedName>
    <alternativeName>
        <fullName evidence="16">eIF-(iso)4F 25 kDa subunit</fullName>
    </alternativeName>
    <alternativeName>
        <fullName evidence="16">eIF-(iso)4F p28 subunit</fullName>
    </alternativeName>
    <alternativeName>
        <fullName evidence="16">mRNA cap-binding protein</fullName>
    </alternativeName>
</protein>
<accession>Q66WU1</accession>
<accession>A0A075QPA9</accession>
<accession>A0A075QVP6</accession>
<accession>A0A1J0FAS8</accession>
<accession>A0A7H1JMP5</accession>
<accession>D3UW25</accession>
<accession>U6BL55</accession>
<proteinExistence type="evidence at protein level"/>
<comment type="function">
    <text evidence="6 8">Component of the protein complex eIF4F, which is involved in the recognition of the mRNA cap, ATP-dependent unwinding of 5'-terminal secondary structure and recruitment of mRNA to the ribosome (PubMed:15988567). Recognizes and binds the 7-methylguanosine-containing mRNA cap during an early step in the initiation of protein synthesis and facilitates ribosome binding by inducing the unwinding of the mRNAs secondary structures (PubMed:15988567). Key component of recessive resistance to potyviruses (Ref.3).</text>
</comment>
<comment type="function">
    <text evidence="8">(Microbial infection) Susceptibility host factor required for viral infection (e.g. potato virus Y (PVY) and pepper mottle virus (PepMoV)) by recruiting viral RNAs to the host ribosomal complex via an interaction with viral genome-linked protein (VPg).</text>
</comment>
<comment type="subunit">
    <text evidence="2">EIF4F is a multi-subunit complex, the composition of which varies with external and internal environmental conditions (By similarity). It is composed of at least EIF4A, EIF4E and EIF4G (By similarity). EIF4E is also known to interact with other partners (By similarity). In higher plants two isoforms of EIF4F have been identified, named isoform EIF4F and isoform EIF(iso)4F (By similarity). Isoform EIF4F has subunits p220 and p26, whereas isoform EIF(iso)4F has subunits p82 and p28 (By similarity).</text>
</comment>
<comment type="subunit">
    <text evidence="17">(Microbial infection) Interacts with viral genome-linked protein (VPg); this interaction is possible in susceptible hosts but impaired in resistant plants.</text>
</comment>
<comment type="subcellular location">
    <subcellularLocation>
        <location evidence="1">Cytoplasm</location>
    </subcellularLocation>
    <subcellularLocation>
        <location evidence="1">Nucleus</location>
    </subcellularLocation>
</comment>
<comment type="alternative products">
    <event type="alternative splicing"/>
    <isoform>
        <id>Q66WU1-1</id>
        <name>1</name>
        <name evidence="12">NteIFiso4E1</name>
        <sequence type="displayed"/>
    </isoform>
    <isoform>
        <id>Q66WU1-2</id>
        <name>2</name>
        <name evidence="12">NteIFiso4E2</name>
        <sequence type="not described"/>
    </isoform>
</comment>
<comment type="tissue specificity">
    <text evidence="6 9">Expressed ubiquitously in seedlings, roots, leaves, sepals, petals, anthers and dehisced pollen, with highest levels in pollen, maturing anthers and roots (PubMed:15988567). Strongly expressed in susceptible plants but not in resistant ones (Ref.4).</text>
</comment>
<comment type="PTM">
    <text evidence="3">According to the redox status, the Cys-99-Cys-138 disulfide bridge may have a role in regulating protein function by affecting its ability to bind capped mRNA.</text>
</comment>
<comment type="disruption phenotype">
    <text evidence="6">Plants lacking both eIF4E and eIFiso4E are semi-dwarf and exhibit an overall reduction in polyribosome loading.</text>
</comment>
<comment type="miscellaneous">
    <text evidence="8">Displayed sequence is allele 2 / eIF4E2a.</text>
</comment>
<comment type="similarity">
    <text evidence="16">Belongs to the eukaryotic initiation factor 4E family.</text>
</comment>
<organism>
    <name type="scientific">Nicotiana tabacum</name>
    <name type="common">Common tobacco</name>
    <dbReference type="NCBI Taxonomy" id="4097"/>
    <lineage>
        <taxon>Eukaryota</taxon>
        <taxon>Viridiplantae</taxon>
        <taxon>Streptophyta</taxon>
        <taxon>Embryophyta</taxon>
        <taxon>Tracheophyta</taxon>
        <taxon>Spermatophyta</taxon>
        <taxon>Magnoliopsida</taxon>
        <taxon>eudicotyledons</taxon>
        <taxon>Gunneridae</taxon>
        <taxon>Pentapetalae</taxon>
        <taxon>asterids</taxon>
        <taxon>lamiids</taxon>
        <taxon>Solanales</taxon>
        <taxon>Solanaceae</taxon>
        <taxon>Nicotianoideae</taxon>
        <taxon>Nicotianeae</taxon>
        <taxon>Nicotiana</taxon>
    </lineage>
</organism>
<keyword id="KW-0025">Alternative splicing</keyword>
<keyword id="KW-0963">Cytoplasm</keyword>
<keyword id="KW-1015">Disulfide bond</keyword>
<keyword id="KW-0945">Host-virus interaction</keyword>
<keyword id="KW-0396">Initiation factor</keyword>
<keyword id="KW-0539">Nucleus</keyword>
<keyword id="KW-0611">Plant defense</keyword>
<keyword id="KW-0648">Protein biosynthesis</keyword>
<keyword id="KW-1185">Reference proteome</keyword>
<keyword id="KW-0694">RNA-binding</keyword>
<keyword id="KW-0810">Translation regulation</keyword>